<evidence type="ECO:0007829" key="1">
    <source>
        <dbReference type="PDB" id="1K6Z"/>
    </source>
</evidence>
<proteinExistence type="evidence at protein level"/>
<accession>P31491</accession>
<reference key="1">
    <citation type="journal article" date="1990" name="J. Bacteriol.">
        <title>Genetic analysis of the yopE region of Yersinia spp.: identification of a novel conserved locus, yerA, regulating yopE expression.</title>
        <authorList>
            <person name="Forsberg A."/>
            <person name="Wolf-Watz H."/>
        </authorList>
    </citation>
    <scope>NUCLEOTIDE SEQUENCE [GENOMIC DNA]</scope>
    <source>
        <strain>EV 76</strain>
        <plasmid>pYV019</plasmid>
    </source>
</reference>
<reference key="2">
    <citation type="journal article" date="1998" name="Infect. Immun.">
        <title>DNA sequencing and analysis of the low-Ca2+-response plasmid pCD1 of Yersinia pestis KIM5.</title>
        <authorList>
            <person name="Perry R.D."/>
            <person name="Straley S.C."/>
            <person name="Fetherston J.D."/>
            <person name="Rose D.J."/>
            <person name="Gregor J."/>
            <person name="Blattner F.R."/>
        </authorList>
    </citation>
    <scope>NUCLEOTIDE SEQUENCE [GENOMIC DNA]</scope>
    <source>
        <strain>KIM5 / Biovar Mediaevalis</strain>
        <plasmid>pCD1</plasmid>
    </source>
</reference>
<reference key="3">
    <citation type="journal article" date="1998" name="J. Bacteriol.">
        <title>Structural organization of virulence-associated plasmids of Yersinia pestis.</title>
        <authorList>
            <person name="Hu P."/>
            <person name="Elliott J."/>
            <person name="McCready P."/>
            <person name="Skowronski E."/>
            <person name="Garnes J."/>
            <person name="Kobayashi A."/>
            <person name="Brubaker R.R."/>
            <person name="Garcia E."/>
        </authorList>
    </citation>
    <scope>NUCLEOTIDE SEQUENCE [GENOMIC DNA]</scope>
    <source>
        <strain>KIM5 / Biovar Mediaevalis</strain>
        <plasmid>pCD1</plasmid>
    </source>
</reference>
<reference key="4">
    <citation type="journal article" date="2001" name="Nature">
        <title>Genome sequence of Yersinia pestis, the causative agent of plague.</title>
        <authorList>
            <person name="Parkhill J."/>
            <person name="Wren B.W."/>
            <person name="Thomson N.R."/>
            <person name="Titball R.W."/>
            <person name="Holden M.T.G."/>
            <person name="Prentice M.B."/>
            <person name="Sebaihia M."/>
            <person name="James K.D."/>
            <person name="Churcher C.M."/>
            <person name="Mungall K.L."/>
            <person name="Baker S."/>
            <person name="Basham D."/>
            <person name="Bentley S.D."/>
            <person name="Brooks K."/>
            <person name="Cerdeno-Tarraga A.-M."/>
            <person name="Chillingworth T."/>
            <person name="Cronin A."/>
            <person name="Davies R.M."/>
            <person name="Davis P."/>
            <person name="Dougan G."/>
            <person name="Feltwell T."/>
            <person name="Hamlin N."/>
            <person name="Holroyd S."/>
            <person name="Jagels K."/>
            <person name="Karlyshev A.V."/>
            <person name="Leather S."/>
            <person name="Moule S."/>
            <person name="Oyston P.C.F."/>
            <person name="Quail M.A."/>
            <person name="Rutherford K.M."/>
            <person name="Simmonds M."/>
            <person name="Skelton J."/>
            <person name="Stevens K."/>
            <person name="Whitehead S."/>
            <person name="Barrell B.G."/>
        </authorList>
    </citation>
    <scope>NUCLEOTIDE SEQUENCE [LARGE SCALE GENOMIC DNA]</scope>
    <source>
        <strain>CO-92 / Biovar Orientalis</strain>
        <plasmid>pCD1</plasmid>
    </source>
</reference>
<reference key="5">
    <citation type="journal article" date="2004" name="DNA Res.">
        <title>Complete genome sequence of Yersinia pestis strain 91001, an isolate avirulent to humans.</title>
        <authorList>
            <person name="Song Y."/>
            <person name="Tong Z."/>
            <person name="Wang J."/>
            <person name="Wang L."/>
            <person name="Guo Z."/>
            <person name="Han Y."/>
            <person name="Zhang J."/>
            <person name="Pei D."/>
            <person name="Zhou D."/>
            <person name="Qin H."/>
            <person name="Pang X."/>
            <person name="Han Y."/>
            <person name="Zhai J."/>
            <person name="Li M."/>
            <person name="Cui B."/>
            <person name="Qi Z."/>
            <person name="Jin L."/>
            <person name="Dai R."/>
            <person name="Chen F."/>
            <person name="Li S."/>
            <person name="Ye C."/>
            <person name="Du Z."/>
            <person name="Lin W."/>
            <person name="Wang J."/>
            <person name="Yu J."/>
            <person name="Yang H."/>
            <person name="Wang J."/>
            <person name="Huang P."/>
            <person name="Yang R."/>
        </authorList>
    </citation>
    <scope>NUCLEOTIDE SEQUENCE [LARGE SCALE GENOMIC DNA]</scope>
    <source>
        <strain>91001 / Biovar Mediaevalis</strain>
        <plasmid>pCD1</plasmid>
    </source>
</reference>
<sequence>MYSFEQAITQLFQQLSLSIPDTIEPVIGVKVGEFACHITEHPVGQILMFTLPSLDNNDEKETLLSHNIFSQDILKPILSWDEVGGHPVLWNRQPLNSLDNNSLYTQLEMLVQGAERLQTSSLISPPRSFS</sequence>
<name>YERA_YERPE</name>
<protein>
    <recommendedName>
        <fullName>YopE regulator</fullName>
    </recommendedName>
</protein>
<geneLocation type="plasmid">
    <name>pCD1</name>
</geneLocation>
<geneLocation type="plasmid">
    <name>pYV019</name>
</geneLocation>
<feature type="chain" id="PRO_0000066203" description="YopE regulator">
    <location>
        <begin position="1"/>
        <end position="130"/>
    </location>
</feature>
<feature type="helix" evidence="1">
    <location>
        <begin position="4"/>
        <end position="15"/>
    </location>
</feature>
<feature type="strand" evidence="1">
    <location>
        <begin position="25"/>
        <end position="31"/>
    </location>
</feature>
<feature type="strand" evidence="1">
    <location>
        <begin position="34"/>
        <end position="40"/>
    </location>
</feature>
<feature type="strand" evidence="1">
    <location>
        <begin position="45"/>
        <end position="50"/>
    </location>
</feature>
<feature type="helix" evidence="1">
    <location>
        <begin position="60"/>
        <end position="65"/>
    </location>
</feature>
<feature type="strand" evidence="1">
    <location>
        <begin position="77"/>
        <end position="81"/>
    </location>
</feature>
<feature type="turn" evidence="1">
    <location>
        <begin position="82"/>
        <end position="85"/>
    </location>
</feature>
<feature type="strand" evidence="1">
    <location>
        <begin position="86"/>
        <end position="94"/>
    </location>
</feature>
<feature type="helix" evidence="1">
    <location>
        <begin position="95"/>
        <end position="97"/>
    </location>
</feature>
<feature type="helix" evidence="1">
    <location>
        <begin position="102"/>
        <end position="116"/>
    </location>
</feature>
<keyword id="KW-0002">3D-structure</keyword>
<keyword id="KW-0010">Activator</keyword>
<keyword id="KW-0614">Plasmid</keyword>
<keyword id="KW-1185">Reference proteome</keyword>
<keyword id="KW-0804">Transcription</keyword>
<keyword id="KW-0805">Transcription regulation</keyword>
<keyword id="KW-0843">Virulence</keyword>
<organism>
    <name type="scientific">Yersinia pestis</name>
    <dbReference type="NCBI Taxonomy" id="632"/>
    <lineage>
        <taxon>Bacteria</taxon>
        <taxon>Pseudomonadati</taxon>
        <taxon>Pseudomonadota</taxon>
        <taxon>Gammaproteobacteria</taxon>
        <taxon>Enterobacterales</taxon>
        <taxon>Yersiniaceae</taxon>
        <taxon>Yersinia</taxon>
    </lineage>
</organism>
<comment type="function">
    <text>Positive regulator of YopE.</text>
</comment>
<comment type="interaction">
    <interactant intactId="EBI-2840013">
        <id>P31491</id>
    </interactant>
    <interactant intactId="EBI-73886">
        <id>Q04206</id>
        <label>RELA</label>
    </interactant>
    <organismsDiffer>true</organismsDiffer>
    <experiments>2</experiments>
</comment>
<gene>
    <name type="primary">yerA</name>
    <name type="ordered locus">YPCD1.05c</name>
    <name type="ordered locus">y5069</name>
    <name type="ordered locus">y0078</name>
    <name type="ordered locus">YP_pCD82</name>
</gene>
<dbReference type="EMBL" id="M34279">
    <property type="protein sequence ID" value="AAA27671.1"/>
    <property type="molecule type" value="Genomic_DNA"/>
</dbReference>
<dbReference type="EMBL" id="AF074612">
    <property type="protein sequence ID" value="AAC69819.1"/>
    <property type="molecule type" value="Genomic_DNA"/>
</dbReference>
<dbReference type="EMBL" id="AF053946">
    <property type="protein sequence ID" value="AAC62588.1"/>
    <property type="molecule type" value="Genomic_DNA"/>
</dbReference>
<dbReference type="EMBL" id="AL117189">
    <property type="protein sequence ID" value="CAB54882.1"/>
    <property type="molecule type" value="Genomic_DNA"/>
</dbReference>
<dbReference type="EMBL" id="AE017043">
    <property type="protein sequence ID" value="AAS58593.1"/>
    <property type="molecule type" value="Genomic_DNA"/>
</dbReference>
<dbReference type="PIR" id="T43606">
    <property type="entry name" value="T43606"/>
</dbReference>
<dbReference type="RefSeq" id="NP_395142.1">
    <property type="nucleotide sequence ID" value="NC_003131.1"/>
</dbReference>
<dbReference type="RefSeq" id="NP_857763.1">
    <property type="nucleotide sequence ID" value="NC_004836.1"/>
</dbReference>
<dbReference type="RefSeq" id="NP_857968.1">
    <property type="nucleotide sequence ID" value="NC_004839.1"/>
</dbReference>
<dbReference type="RefSeq" id="WP_002213403.1">
    <property type="nucleotide sequence ID" value="NZ_WUCM01000133.1"/>
</dbReference>
<dbReference type="PDB" id="1JYA">
    <property type="method" value="X-ray"/>
    <property type="resolution" value="1.74 A"/>
    <property type="chains" value="A/B=1-130"/>
</dbReference>
<dbReference type="PDB" id="1K6Z">
    <property type="method" value="X-ray"/>
    <property type="resolution" value="2.00 A"/>
    <property type="chains" value="A/B=1-130"/>
</dbReference>
<dbReference type="PDBsum" id="1JYA"/>
<dbReference type="PDBsum" id="1K6Z"/>
<dbReference type="BMRB" id="P31491"/>
<dbReference type="SMR" id="P31491"/>
<dbReference type="IntAct" id="P31491">
    <property type="interactions" value="5"/>
</dbReference>
<dbReference type="MINT" id="P31491"/>
<dbReference type="DrugBank" id="DB03366">
    <property type="generic name" value="Imidazole"/>
</dbReference>
<dbReference type="PaxDb" id="214092-5832428"/>
<dbReference type="DNASU" id="1149333"/>
<dbReference type="EnsemblBacteria" id="AAS58593">
    <property type="protein sequence ID" value="AAS58593"/>
    <property type="gene ID" value="YP_pCD82"/>
</dbReference>
<dbReference type="KEGG" id="ype:YPCD1.05c"/>
<dbReference type="KEGG" id="ypm:YP_pCD82"/>
<dbReference type="PATRIC" id="fig|214092.21.peg.6"/>
<dbReference type="eggNOG" id="ENOG50332A3">
    <property type="taxonomic scope" value="Bacteria"/>
</dbReference>
<dbReference type="HOGENOM" id="CLU_159406_0_0_6"/>
<dbReference type="OMA" id="LFSQDPC"/>
<dbReference type="OrthoDB" id="6983386at2"/>
<dbReference type="EvolutionaryTrace" id="P31491"/>
<dbReference type="Proteomes" id="UP000000815">
    <property type="component" value="Plasmid pCD1"/>
</dbReference>
<dbReference type="Proteomes" id="UP000001019">
    <property type="component" value="Plasmid pCD1"/>
</dbReference>
<dbReference type="GO" id="GO:0030254">
    <property type="term" value="P:protein secretion by the type III secretion system"/>
    <property type="evidence" value="ECO:0007669"/>
    <property type="project" value="InterPro"/>
</dbReference>
<dbReference type="CDD" id="cd17029">
    <property type="entry name" value="T3SC_IA_SycE_SpcS-like"/>
    <property type="match status" value="1"/>
</dbReference>
<dbReference type="Gene3D" id="3.30.1460.10">
    <property type="match status" value="1"/>
</dbReference>
<dbReference type="InterPro" id="IPR005416">
    <property type="entry name" value="T3SS_chp_SycE"/>
</dbReference>
<dbReference type="InterPro" id="IPR010261">
    <property type="entry name" value="Tir_chaperone"/>
</dbReference>
<dbReference type="Pfam" id="PF05932">
    <property type="entry name" value="CesT"/>
    <property type="match status" value="1"/>
</dbReference>
<dbReference type="PIRSF" id="PIRSF011271">
    <property type="entry name" value="T3SS_chp_SycE_GmN_bac"/>
    <property type="match status" value="1"/>
</dbReference>
<dbReference type="PRINTS" id="PR01596">
    <property type="entry name" value="SYCECHAPRONE"/>
</dbReference>
<dbReference type="SUPFAM" id="SSF69635">
    <property type="entry name" value="Type III secretory system chaperone-like"/>
    <property type="match status" value="1"/>
</dbReference>